<name>DAPF_MYCSJ</name>
<protein>
    <recommendedName>
        <fullName evidence="1">Diaminopimelate epimerase</fullName>
        <shortName evidence="1">DAP epimerase</shortName>
        <ecNumber evidence="1">5.1.1.7</ecNumber>
    </recommendedName>
    <alternativeName>
        <fullName evidence="1">PLP-independent amino acid racemase</fullName>
    </alternativeName>
</protein>
<proteinExistence type="inferred from homology"/>
<comment type="function">
    <text evidence="1">Catalyzes the stereoinversion of LL-2,6-diaminopimelate (L,L-DAP) to meso-diaminopimelate (meso-DAP), a precursor of L-lysine and an essential component of the bacterial peptidoglycan.</text>
</comment>
<comment type="catalytic activity">
    <reaction evidence="1">
        <text>(2S,6S)-2,6-diaminopimelate = meso-2,6-diaminopimelate</text>
        <dbReference type="Rhea" id="RHEA:15393"/>
        <dbReference type="ChEBI" id="CHEBI:57609"/>
        <dbReference type="ChEBI" id="CHEBI:57791"/>
        <dbReference type="EC" id="5.1.1.7"/>
    </reaction>
</comment>
<comment type="pathway">
    <text evidence="1">Amino-acid biosynthesis; L-lysine biosynthesis via DAP pathway; DL-2,6-diaminopimelate from LL-2,6-diaminopimelate: step 1/1.</text>
</comment>
<comment type="subunit">
    <text evidence="1">Homodimer.</text>
</comment>
<comment type="subcellular location">
    <subcellularLocation>
        <location evidence="1">Cytoplasm</location>
    </subcellularLocation>
</comment>
<comment type="similarity">
    <text evidence="1">Belongs to the diaminopimelate epimerase family.</text>
</comment>
<organism>
    <name type="scientific">Mycobacterium sp. (strain JLS)</name>
    <dbReference type="NCBI Taxonomy" id="164757"/>
    <lineage>
        <taxon>Bacteria</taxon>
        <taxon>Bacillati</taxon>
        <taxon>Actinomycetota</taxon>
        <taxon>Actinomycetes</taxon>
        <taxon>Mycobacteriales</taxon>
        <taxon>Mycobacteriaceae</taxon>
        <taxon>Mycobacterium</taxon>
    </lineage>
</organism>
<keyword id="KW-0028">Amino-acid biosynthesis</keyword>
<keyword id="KW-0963">Cytoplasm</keyword>
<keyword id="KW-0413">Isomerase</keyword>
<keyword id="KW-0457">Lysine biosynthesis</keyword>
<accession>A3PYF9</accession>
<gene>
    <name evidence="1" type="primary">dapF</name>
    <name type="ordered locus">Mjls_2150</name>
</gene>
<feature type="chain" id="PRO_1000011910" description="Diaminopimelate epimerase">
    <location>
        <begin position="1"/>
        <end position="293"/>
    </location>
</feature>
<feature type="active site" description="Proton donor" evidence="1">
    <location>
        <position position="87"/>
    </location>
</feature>
<feature type="active site" description="Proton acceptor" evidence="1">
    <location>
        <position position="229"/>
    </location>
</feature>
<feature type="binding site" evidence="1">
    <location>
        <position position="11"/>
    </location>
    <ligand>
        <name>substrate</name>
    </ligand>
</feature>
<feature type="binding site" evidence="1">
    <location>
        <position position="78"/>
    </location>
    <ligand>
        <name>substrate</name>
    </ligand>
</feature>
<feature type="binding site" evidence="1">
    <location>
        <begin position="88"/>
        <end position="89"/>
    </location>
    <ligand>
        <name>substrate</name>
    </ligand>
</feature>
<feature type="binding site" evidence="1">
    <location>
        <position position="166"/>
    </location>
    <ligand>
        <name>substrate</name>
    </ligand>
</feature>
<feature type="binding site" evidence="1">
    <location>
        <position position="202"/>
    </location>
    <ligand>
        <name>substrate</name>
    </ligand>
</feature>
<feature type="binding site" evidence="1">
    <location>
        <begin position="220"/>
        <end position="221"/>
    </location>
    <ligand>
        <name>substrate</name>
    </ligand>
</feature>
<feature type="binding site" evidence="1">
    <location>
        <begin position="230"/>
        <end position="231"/>
    </location>
    <ligand>
        <name>substrate</name>
    </ligand>
</feature>
<feature type="site" description="Could be important to modulate the pK values of the two catalytic cysteine residues" evidence="1">
    <location>
        <position position="168"/>
    </location>
</feature>
<feature type="site" description="Could be important to modulate the pK values of the two catalytic cysteine residues" evidence="1">
    <location>
        <position position="220"/>
    </location>
</feature>
<reference key="1">
    <citation type="submission" date="2007-02" db="EMBL/GenBank/DDBJ databases">
        <title>Complete sequence of Mycobacterium sp. JLS.</title>
        <authorList>
            <consortium name="US DOE Joint Genome Institute"/>
            <person name="Copeland A."/>
            <person name="Lucas S."/>
            <person name="Lapidus A."/>
            <person name="Barry K."/>
            <person name="Detter J.C."/>
            <person name="Glavina del Rio T."/>
            <person name="Hammon N."/>
            <person name="Israni S."/>
            <person name="Dalin E."/>
            <person name="Tice H."/>
            <person name="Pitluck S."/>
            <person name="Chain P."/>
            <person name="Malfatti S."/>
            <person name="Shin M."/>
            <person name="Vergez L."/>
            <person name="Schmutz J."/>
            <person name="Larimer F."/>
            <person name="Land M."/>
            <person name="Hauser L."/>
            <person name="Kyrpides N."/>
            <person name="Mikhailova N."/>
            <person name="Miller C.D."/>
            <person name="Anderson A.J."/>
            <person name="Sims R.C."/>
            <person name="Richardson P."/>
        </authorList>
    </citation>
    <scope>NUCLEOTIDE SEQUENCE [LARGE SCALE GENOMIC DNA]</scope>
    <source>
        <strain>JLS</strain>
    </source>
</reference>
<sequence>MQFAKGHGTQNDFVLLPDLDARLALTPAVVSALCDRRRGLGADGVLRVTTAKAALSAGVFERLPEGVGAGDWYMDYRNADGSIAQMCGNGVRVFAHYLRAADLESRDEFVVGSLAGPRPVVLHGFDLAHRSRAEVTVEMGKVNLLGSGSAVVGGRRFTGLGIDVGNPHLACVDTTLTEAELAALDVAAPVDFDPAQFPDGVNVEVLTALRDGAVSMRVHERGVGETRSCGTGTVAAAVAALAQEGAAVGTLDVRIPGGVVTVSVTDTTSFLRGPSELVATGELAGEWWQSHQR</sequence>
<dbReference type="EC" id="5.1.1.7" evidence="1"/>
<dbReference type="EMBL" id="CP000580">
    <property type="protein sequence ID" value="ABN97936.1"/>
    <property type="molecule type" value="Genomic_DNA"/>
</dbReference>
<dbReference type="SMR" id="A3PYF9"/>
<dbReference type="KEGG" id="mjl:Mjls_2150"/>
<dbReference type="HOGENOM" id="CLU_053306_4_0_11"/>
<dbReference type="BioCyc" id="MSP164757:G1G8C-2170-MONOMER"/>
<dbReference type="UniPathway" id="UPA00034">
    <property type="reaction ID" value="UER00025"/>
</dbReference>
<dbReference type="GO" id="GO:0005829">
    <property type="term" value="C:cytosol"/>
    <property type="evidence" value="ECO:0007669"/>
    <property type="project" value="TreeGrafter"/>
</dbReference>
<dbReference type="GO" id="GO:0008837">
    <property type="term" value="F:diaminopimelate epimerase activity"/>
    <property type="evidence" value="ECO:0007669"/>
    <property type="project" value="UniProtKB-UniRule"/>
</dbReference>
<dbReference type="GO" id="GO:0009089">
    <property type="term" value="P:lysine biosynthetic process via diaminopimelate"/>
    <property type="evidence" value="ECO:0007669"/>
    <property type="project" value="UniProtKB-UniRule"/>
</dbReference>
<dbReference type="Gene3D" id="3.10.310.10">
    <property type="entry name" value="Diaminopimelate Epimerase, Chain A, domain 1"/>
    <property type="match status" value="2"/>
</dbReference>
<dbReference type="HAMAP" id="MF_00197">
    <property type="entry name" value="DAP_epimerase"/>
    <property type="match status" value="1"/>
</dbReference>
<dbReference type="InterPro" id="IPR018510">
    <property type="entry name" value="DAP_epimerase_AS"/>
</dbReference>
<dbReference type="InterPro" id="IPR001653">
    <property type="entry name" value="DAP_epimerase_DapF"/>
</dbReference>
<dbReference type="NCBIfam" id="TIGR00652">
    <property type="entry name" value="DapF"/>
    <property type="match status" value="1"/>
</dbReference>
<dbReference type="PANTHER" id="PTHR31689:SF0">
    <property type="entry name" value="DIAMINOPIMELATE EPIMERASE"/>
    <property type="match status" value="1"/>
</dbReference>
<dbReference type="PANTHER" id="PTHR31689">
    <property type="entry name" value="DIAMINOPIMELATE EPIMERASE, CHLOROPLASTIC"/>
    <property type="match status" value="1"/>
</dbReference>
<dbReference type="Pfam" id="PF01678">
    <property type="entry name" value="DAP_epimerase"/>
    <property type="match status" value="2"/>
</dbReference>
<dbReference type="SUPFAM" id="SSF54506">
    <property type="entry name" value="Diaminopimelate epimerase-like"/>
    <property type="match status" value="2"/>
</dbReference>
<dbReference type="PROSITE" id="PS01326">
    <property type="entry name" value="DAP_EPIMERASE"/>
    <property type="match status" value="1"/>
</dbReference>
<evidence type="ECO:0000255" key="1">
    <source>
        <dbReference type="HAMAP-Rule" id="MF_00197"/>
    </source>
</evidence>